<sequence>MEPGAAELYDQALLGILQHVGNVQDFLRVLFGFLYRKTDFYRLLRHPSDRMGFPPGAAQALVLQVFKTFDHMARQDDEKRRQELEEKIRRKEEEEAKTVSAAAAEKEPVPVPVQEIEIDSTTELGGRQEVEKVQPPGPVKEMAHGSLEAEAPGAVAGAAEVPREPPVLPRIQEQFQKNPDSYNGAVRENYTWSQDYTDLEVRVPVPKHVVKGKQVSVALSSSSIRVAMLEENGERVLMEGKLTHKINTESSLWSLEPGKCVLVNLSKVGEYWWNAILEGEEPIDIDKINKERSMATVDEEEQAVLDRLTFDYHQKLQGKPQSHELKVHEMLKKGWDAEGSPFRGQRFDPAMFNISPGAVQF</sequence>
<evidence type="ECO:0000250" key="1">
    <source>
        <dbReference type="UniProtKB" id="Q8IVD9"/>
    </source>
</evidence>
<evidence type="ECO:0000255" key="2">
    <source>
        <dbReference type="PROSITE-ProRule" id="PRU00547"/>
    </source>
</evidence>
<evidence type="ECO:0000256" key="3">
    <source>
        <dbReference type="SAM" id="MobiDB-lite"/>
    </source>
</evidence>
<proteinExistence type="evidence at transcript level"/>
<reference key="1">
    <citation type="submission" date="2004-11" db="EMBL/GenBank/DDBJ databases">
        <authorList>
            <consortium name="The German cDNA consortium"/>
        </authorList>
    </citation>
    <scope>NUCLEOTIDE SEQUENCE [LARGE SCALE MRNA]</scope>
    <source>
        <tissue>Heart</tissue>
    </source>
</reference>
<protein>
    <recommendedName>
        <fullName>NudC domain-containing protein 3</fullName>
    </recommendedName>
</protein>
<accession>Q5RB75</accession>
<gene>
    <name type="primary">NUDCD3</name>
</gene>
<organism>
    <name type="scientific">Pongo abelii</name>
    <name type="common">Sumatran orangutan</name>
    <name type="synonym">Pongo pygmaeus abelii</name>
    <dbReference type="NCBI Taxonomy" id="9601"/>
    <lineage>
        <taxon>Eukaryota</taxon>
        <taxon>Metazoa</taxon>
        <taxon>Chordata</taxon>
        <taxon>Craniata</taxon>
        <taxon>Vertebrata</taxon>
        <taxon>Euteleostomi</taxon>
        <taxon>Mammalia</taxon>
        <taxon>Eutheria</taxon>
        <taxon>Euarchontoglires</taxon>
        <taxon>Primates</taxon>
        <taxon>Haplorrhini</taxon>
        <taxon>Catarrhini</taxon>
        <taxon>Hominidae</taxon>
        <taxon>Pongo</taxon>
    </lineage>
</organism>
<feature type="chain" id="PRO_0000057987" description="NudC domain-containing protein 3">
    <location>
        <begin position="1"/>
        <end position="361"/>
    </location>
</feature>
<feature type="domain" description="CS" evidence="2">
    <location>
        <begin position="185"/>
        <end position="277"/>
    </location>
</feature>
<feature type="region of interest" description="Disordered" evidence="3">
    <location>
        <begin position="87"/>
        <end position="106"/>
    </location>
</feature>
<feature type="compositionally biased region" description="Basic and acidic residues" evidence="3">
    <location>
        <begin position="87"/>
        <end position="97"/>
    </location>
</feature>
<feature type="modified residue" description="Phosphoserine" evidence="1">
    <location>
        <position position="146"/>
    </location>
</feature>
<feature type="modified residue" description="Phosphoserine" evidence="1">
    <location>
        <position position="340"/>
    </location>
</feature>
<feature type="modified residue" description="Phosphoserine" evidence="1">
    <location>
        <position position="355"/>
    </location>
</feature>
<keyword id="KW-0597">Phosphoprotein</keyword>
<keyword id="KW-1185">Reference proteome</keyword>
<name>NUDC3_PONAB</name>
<dbReference type="EMBL" id="CR858778">
    <property type="protein sequence ID" value="CAH90985.1"/>
    <property type="molecule type" value="mRNA"/>
</dbReference>
<dbReference type="RefSeq" id="NP_001127359.1">
    <property type="nucleotide sequence ID" value="NM_001133887.1"/>
</dbReference>
<dbReference type="BMRB" id="Q5RB75"/>
<dbReference type="SMR" id="Q5RB75"/>
<dbReference type="FunCoup" id="Q5RB75">
    <property type="interactions" value="1287"/>
</dbReference>
<dbReference type="STRING" id="9601.ENSPPYP00000019717"/>
<dbReference type="Ensembl" id="ENSPPYT00000020493.3">
    <property type="protein sequence ID" value="ENSPPYP00000019717.3"/>
    <property type="gene ID" value="ENSPPYG00000017593.3"/>
</dbReference>
<dbReference type="GeneID" id="100174424"/>
<dbReference type="KEGG" id="pon:100174424"/>
<dbReference type="CTD" id="23386"/>
<dbReference type="eggNOG" id="KOG2265">
    <property type="taxonomic scope" value="Eukaryota"/>
</dbReference>
<dbReference type="GeneTree" id="ENSGT00940000158444"/>
<dbReference type="InParanoid" id="Q5RB75"/>
<dbReference type="OMA" id="EINIEMP"/>
<dbReference type="OrthoDB" id="416217at2759"/>
<dbReference type="Proteomes" id="UP000001595">
    <property type="component" value="Chromosome 7"/>
</dbReference>
<dbReference type="GO" id="GO:0005737">
    <property type="term" value="C:cytoplasm"/>
    <property type="evidence" value="ECO:0007669"/>
    <property type="project" value="TreeGrafter"/>
</dbReference>
<dbReference type="GO" id="GO:0005868">
    <property type="term" value="C:cytoplasmic dynein complex"/>
    <property type="evidence" value="ECO:0007669"/>
    <property type="project" value="Ensembl"/>
</dbReference>
<dbReference type="GO" id="GO:0051082">
    <property type="term" value="F:unfolded protein binding"/>
    <property type="evidence" value="ECO:0007669"/>
    <property type="project" value="TreeGrafter"/>
</dbReference>
<dbReference type="GO" id="GO:0060271">
    <property type="term" value="P:cilium assembly"/>
    <property type="evidence" value="ECO:0007669"/>
    <property type="project" value="Ensembl"/>
</dbReference>
<dbReference type="GO" id="GO:0006457">
    <property type="term" value="P:protein folding"/>
    <property type="evidence" value="ECO:0007669"/>
    <property type="project" value="TreeGrafter"/>
</dbReference>
<dbReference type="GO" id="GO:1905793">
    <property type="term" value="P:protein localization to pericentriolar material"/>
    <property type="evidence" value="ECO:0007669"/>
    <property type="project" value="Ensembl"/>
</dbReference>
<dbReference type="CDD" id="cd06495">
    <property type="entry name" value="p23_NUDCD3_like"/>
    <property type="match status" value="1"/>
</dbReference>
<dbReference type="FunFam" id="2.60.40.790:FF:000023">
    <property type="entry name" value="NudC domain-containing protein 3"/>
    <property type="match status" value="1"/>
</dbReference>
<dbReference type="Gene3D" id="2.60.40.790">
    <property type="match status" value="1"/>
</dbReference>
<dbReference type="InterPro" id="IPR007052">
    <property type="entry name" value="CS_dom"/>
</dbReference>
<dbReference type="InterPro" id="IPR008978">
    <property type="entry name" value="HSP20-like_chaperone"/>
</dbReference>
<dbReference type="InterPro" id="IPR037898">
    <property type="entry name" value="NudC_fam"/>
</dbReference>
<dbReference type="InterPro" id="IPR025934">
    <property type="entry name" value="NudC_N_dom"/>
</dbReference>
<dbReference type="InterPro" id="IPR037905">
    <property type="entry name" value="p23_NUDCD3"/>
</dbReference>
<dbReference type="PANTHER" id="PTHR12356">
    <property type="entry name" value="NUCLEAR MOVEMENT PROTEIN NUDC"/>
    <property type="match status" value="1"/>
</dbReference>
<dbReference type="PANTHER" id="PTHR12356:SF19">
    <property type="entry name" value="NUDC DOMAIN-CONTAINING PROTEIN 3"/>
    <property type="match status" value="1"/>
</dbReference>
<dbReference type="Pfam" id="PF04969">
    <property type="entry name" value="CS"/>
    <property type="match status" value="1"/>
</dbReference>
<dbReference type="Pfam" id="PF14050">
    <property type="entry name" value="Nudc_N"/>
    <property type="match status" value="1"/>
</dbReference>
<dbReference type="SUPFAM" id="SSF49764">
    <property type="entry name" value="HSP20-like chaperones"/>
    <property type="match status" value="1"/>
</dbReference>
<dbReference type="PROSITE" id="PS51203">
    <property type="entry name" value="CS"/>
    <property type="match status" value="1"/>
</dbReference>